<evidence type="ECO:0000250" key="1">
    <source>
        <dbReference type="UniProtKB" id="Q9BXB1"/>
    </source>
</evidence>
<evidence type="ECO:0000255" key="2"/>
<evidence type="ECO:0000255" key="3">
    <source>
        <dbReference type="PROSITE-ProRule" id="PRU00521"/>
    </source>
</evidence>
<evidence type="ECO:0000256" key="4">
    <source>
        <dbReference type="SAM" id="MobiDB-lite"/>
    </source>
</evidence>
<evidence type="ECO:0000269" key="5">
    <source>
    </source>
</evidence>
<evidence type="ECO:0000269" key="6">
    <source>
    </source>
</evidence>
<evidence type="ECO:0000269" key="7">
    <source>
    </source>
</evidence>
<evidence type="ECO:0000269" key="8">
    <source>
    </source>
</evidence>
<evidence type="ECO:0000269" key="9">
    <source>
    </source>
</evidence>
<evidence type="ECO:0000269" key="10">
    <source>
    </source>
</evidence>
<evidence type="ECO:0000269" key="11">
    <source>
    </source>
</evidence>
<evidence type="ECO:0000269" key="12">
    <source>
    </source>
</evidence>
<evidence type="ECO:0000269" key="13">
    <source>
    </source>
</evidence>
<evidence type="ECO:0000269" key="14">
    <source>
    </source>
</evidence>
<evidence type="ECO:0000269" key="15">
    <source>
    </source>
</evidence>
<evidence type="ECO:0000269" key="16">
    <source>
    </source>
</evidence>
<evidence type="ECO:0000269" key="17">
    <source>
    </source>
</evidence>
<evidence type="ECO:0000269" key="18">
    <source>
    </source>
</evidence>
<evidence type="ECO:0000269" key="19">
    <source>
    </source>
</evidence>
<evidence type="ECO:0000269" key="20">
    <source>
    </source>
</evidence>
<evidence type="ECO:0000269" key="21">
    <source>
    </source>
</evidence>
<evidence type="ECO:0000269" key="22">
    <source>
    </source>
</evidence>
<evidence type="ECO:0000269" key="23">
    <source>
    </source>
</evidence>
<evidence type="ECO:0000269" key="24">
    <source>
    </source>
</evidence>
<evidence type="ECO:0000269" key="25">
    <source>
    </source>
</evidence>
<evidence type="ECO:0000305" key="26"/>
<dbReference type="EMBL" id="AL845423">
    <property type="status" value="NOT_ANNOTATED_CDS"/>
    <property type="molecule type" value="Genomic_DNA"/>
</dbReference>
<dbReference type="EMBL" id="AL928922">
    <property type="status" value="NOT_ANNOTATED_CDS"/>
    <property type="molecule type" value="Genomic_DNA"/>
</dbReference>
<dbReference type="EMBL" id="BX294391">
    <property type="status" value="NOT_ANNOTATED_CDS"/>
    <property type="molecule type" value="Genomic_DNA"/>
</dbReference>
<dbReference type="EMBL" id="AY255619">
    <property type="protein sequence ID" value="AAO85131.1"/>
    <property type="molecule type" value="mRNA"/>
</dbReference>
<dbReference type="EMBL" id="AK044357">
    <property type="protein sequence ID" value="BAC31882.1"/>
    <property type="molecule type" value="mRNA"/>
</dbReference>
<dbReference type="EMBL" id="BC056637">
    <property type="protein sequence ID" value="AAH56637.1"/>
    <property type="molecule type" value="mRNA"/>
</dbReference>
<dbReference type="CCDS" id="CCDS38195.1">
    <molecule id="A2ARI4-1"/>
</dbReference>
<dbReference type="RefSeq" id="NP_766259.2">
    <molecule id="A2ARI4-1"/>
    <property type="nucleotide sequence ID" value="NM_172671.2"/>
</dbReference>
<dbReference type="SMR" id="A2ARI4"/>
<dbReference type="CORUM" id="A2ARI4"/>
<dbReference type="FunCoup" id="A2ARI4">
    <property type="interactions" value="1089"/>
</dbReference>
<dbReference type="STRING" id="10090.ENSMUSP00000047325"/>
<dbReference type="GlyCosmos" id="A2ARI4">
    <property type="glycosylation" value="5 sites, No reported glycans"/>
</dbReference>
<dbReference type="GlyGen" id="A2ARI4">
    <property type="glycosylation" value="5 sites"/>
</dbReference>
<dbReference type="iPTMnet" id="A2ARI4"/>
<dbReference type="PhosphoSitePlus" id="A2ARI4"/>
<dbReference type="PaxDb" id="10090-ENSMUSP00000047325"/>
<dbReference type="PeptideAtlas" id="A2ARI4"/>
<dbReference type="ProteomicsDB" id="290023">
    <molecule id="A2ARI4-1"/>
</dbReference>
<dbReference type="ProteomicsDB" id="290024">
    <molecule id="A2ARI4-2"/>
</dbReference>
<dbReference type="Antibodypedia" id="12720">
    <property type="antibodies" value="418 antibodies from 33 providers"/>
</dbReference>
<dbReference type="DNASU" id="107515"/>
<dbReference type="Ensembl" id="ENSMUST00000046548.14">
    <molecule id="A2ARI4-1"/>
    <property type="protein sequence ID" value="ENSMUSP00000047325.8"/>
    <property type="gene ID" value="ENSMUSG00000050199.14"/>
</dbReference>
<dbReference type="Ensembl" id="ENSMUST00000111037.3">
    <molecule id="A2ARI4-2"/>
    <property type="protein sequence ID" value="ENSMUSP00000106666.3"/>
    <property type="gene ID" value="ENSMUSG00000050199.14"/>
</dbReference>
<dbReference type="GeneID" id="107515"/>
<dbReference type="KEGG" id="mmu:107515"/>
<dbReference type="UCSC" id="uc008lmq.1">
    <molecule id="A2ARI4-1"/>
    <property type="organism name" value="mouse"/>
</dbReference>
<dbReference type="AGR" id="MGI:1891468"/>
<dbReference type="CTD" id="55366"/>
<dbReference type="MGI" id="MGI:1891468">
    <property type="gene designation" value="Lgr4"/>
</dbReference>
<dbReference type="VEuPathDB" id="HostDB:ENSMUSG00000050199"/>
<dbReference type="eggNOG" id="KOG0619">
    <property type="taxonomic scope" value="Eukaryota"/>
</dbReference>
<dbReference type="eggNOG" id="KOG2087">
    <property type="taxonomic scope" value="Eukaryota"/>
</dbReference>
<dbReference type="GeneTree" id="ENSGT00940000157925"/>
<dbReference type="HOGENOM" id="CLU_006843_0_0_1"/>
<dbReference type="InParanoid" id="A2ARI4"/>
<dbReference type="OMA" id="PPGNCSM"/>
<dbReference type="OrthoDB" id="1883493at2759"/>
<dbReference type="PhylomeDB" id="A2ARI4"/>
<dbReference type="TreeFam" id="TF316814"/>
<dbReference type="BioGRID-ORCS" id="107515">
    <property type="hits" value="3 hits in 79 CRISPR screens"/>
</dbReference>
<dbReference type="ChiTaRS" id="Lgr4">
    <property type="organism name" value="mouse"/>
</dbReference>
<dbReference type="PRO" id="PR:A2ARI4"/>
<dbReference type="Proteomes" id="UP000000589">
    <property type="component" value="Chromosome 2"/>
</dbReference>
<dbReference type="RNAct" id="A2ARI4">
    <property type="molecule type" value="protein"/>
</dbReference>
<dbReference type="Bgee" id="ENSMUSG00000050199">
    <property type="expression patterns" value="Expressed in indifferent gonad and 232 other cell types or tissues"/>
</dbReference>
<dbReference type="GO" id="GO:0005886">
    <property type="term" value="C:plasma membrane"/>
    <property type="evidence" value="ECO:0000314"/>
    <property type="project" value="UniProtKB"/>
</dbReference>
<dbReference type="GO" id="GO:0016500">
    <property type="term" value="F:protein-hormone receptor activity"/>
    <property type="evidence" value="ECO:0007669"/>
    <property type="project" value="InterPro"/>
</dbReference>
<dbReference type="GO" id="GO:0004888">
    <property type="term" value="F:transmembrane signaling receptor activity"/>
    <property type="evidence" value="ECO:0000314"/>
    <property type="project" value="UniProtKB"/>
</dbReference>
<dbReference type="GO" id="GO:0030282">
    <property type="term" value="P:bone mineralization"/>
    <property type="evidence" value="ECO:0000315"/>
    <property type="project" value="UniProtKB"/>
</dbReference>
<dbReference type="GO" id="GO:0046849">
    <property type="term" value="P:bone remodeling"/>
    <property type="evidence" value="ECO:0000315"/>
    <property type="project" value="UniProtKB"/>
</dbReference>
<dbReference type="GO" id="GO:0032922">
    <property type="term" value="P:circadian regulation of gene expression"/>
    <property type="evidence" value="ECO:0000315"/>
    <property type="project" value="UniProtKB"/>
</dbReference>
<dbReference type="GO" id="GO:0007623">
    <property type="term" value="P:circadian rhythm"/>
    <property type="evidence" value="ECO:0000270"/>
    <property type="project" value="UniProtKB"/>
</dbReference>
<dbReference type="GO" id="GO:0048565">
    <property type="term" value="P:digestive tract development"/>
    <property type="evidence" value="ECO:0000315"/>
    <property type="project" value="MGI"/>
</dbReference>
<dbReference type="GO" id="GO:0050673">
    <property type="term" value="P:epithelial cell proliferation"/>
    <property type="evidence" value="ECO:0000315"/>
    <property type="project" value="MGI"/>
</dbReference>
<dbReference type="GO" id="GO:2001013">
    <property type="term" value="P:epithelial cell proliferation involved in renal tubule morphogenesis"/>
    <property type="evidence" value="ECO:0000316"/>
    <property type="project" value="MGI"/>
</dbReference>
<dbReference type="GO" id="GO:0007186">
    <property type="term" value="P:G protein-coupled receptor signaling pathway"/>
    <property type="evidence" value="ECO:0007669"/>
    <property type="project" value="UniProtKB-KW"/>
</dbReference>
<dbReference type="GO" id="GO:0001942">
    <property type="term" value="P:hair follicle development"/>
    <property type="evidence" value="ECO:0000315"/>
    <property type="project" value="MGI"/>
</dbReference>
<dbReference type="GO" id="GO:0045087">
    <property type="term" value="P:innate immune response"/>
    <property type="evidence" value="ECO:0007669"/>
    <property type="project" value="UniProtKB-KW"/>
</dbReference>
<dbReference type="GO" id="GO:0036335">
    <property type="term" value="P:intestinal stem cell homeostasis"/>
    <property type="evidence" value="ECO:0000315"/>
    <property type="project" value="MGI"/>
</dbReference>
<dbReference type="GO" id="GO:0030539">
    <property type="term" value="P:male genitalia development"/>
    <property type="evidence" value="ECO:0000315"/>
    <property type="project" value="MGI"/>
</dbReference>
<dbReference type="GO" id="GO:0072224">
    <property type="term" value="P:metanephric glomerulus development"/>
    <property type="evidence" value="ECO:0000315"/>
    <property type="project" value="UniProtKB"/>
</dbReference>
<dbReference type="GO" id="GO:0072282">
    <property type="term" value="P:metanephric nephron tubule morphogenesis"/>
    <property type="evidence" value="ECO:0000315"/>
    <property type="project" value="UniProtKB"/>
</dbReference>
<dbReference type="GO" id="GO:0120163">
    <property type="term" value="P:negative regulation of cold-induced thermogenesis"/>
    <property type="evidence" value="ECO:0000315"/>
    <property type="project" value="YuBioLab"/>
</dbReference>
<dbReference type="GO" id="GO:0001818">
    <property type="term" value="P:negative regulation of cytokine production"/>
    <property type="evidence" value="ECO:0000315"/>
    <property type="project" value="UniProtKB"/>
</dbReference>
<dbReference type="GO" id="GO:0034122">
    <property type="term" value="P:negative regulation of toll-like receptor signaling pathway"/>
    <property type="evidence" value="ECO:0000315"/>
    <property type="project" value="UniProtKB"/>
</dbReference>
<dbReference type="GO" id="GO:0001649">
    <property type="term" value="P:osteoblast differentiation"/>
    <property type="evidence" value="ECO:0000315"/>
    <property type="project" value="UniProtKB"/>
</dbReference>
<dbReference type="GO" id="GO:0090190">
    <property type="term" value="P:positive regulation of branching involved in ureteric bud morphogenesis"/>
    <property type="evidence" value="ECO:0000315"/>
    <property type="project" value="UniProtKB"/>
</dbReference>
<dbReference type="GO" id="GO:0090263">
    <property type="term" value="P:positive regulation of canonical Wnt signaling pathway"/>
    <property type="evidence" value="ECO:0000314"/>
    <property type="project" value="UniProtKB"/>
</dbReference>
<dbReference type="GO" id="GO:0007283">
    <property type="term" value="P:spermatogenesis"/>
    <property type="evidence" value="ECO:0000315"/>
    <property type="project" value="UniProtKB"/>
</dbReference>
<dbReference type="GO" id="GO:0035239">
    <property type="term" value="P:tube morphogenesis"/>
    <property type="evidence" value="ECO:0000315"/>
    <property type="project" value="MGI"/>
</dbReference>
<dbReference type="GO" id="GO:0016055">
    <property type="term" value="P:Wnt signaling pathway"/>
    <property type="evidence" value="ECO:0007669"/>
    <property type="project" value="UniProtKB-KW"/>
</dbReference>
<dbReference type="CDD" id="cd15361">
    <property type="entry name" value="7tmA_LGR4"/>
    <property type="match status" value="1"/>
</dbReference>
<dbReference type="FunFam" id="1.20.1070.10:FF:000028">
    <property type="entry name" value="leucine-rich repeat-containing G-protein coupled receptor 4 isoform X1"/>
    <property type="match status" value="1"/>
</dbReference>
<dbReference type="FunFam" id="3.80.10.10:FF:000028">
    <property type="entry name" value="leucine-rich repeat-containing G-protein coupled receptor 4 isoform X1"/>
    <property type="match status" value="1"/>
</dbReference>
<dbReference type="Gene3D" id="1.20.1070.10">
    <property type="entry name" value="Rhodopsin 7-helix transmembrane proteins"/>
    <property type="match status" value="1"/>
</dbReference>
<dbReference type="Gene3D" id="3.80.10.10">
    <property type="entry name" value="Ribonuclease Inhibitor"/>
    <property type="match status" value="1"/>
</dbReference>
<dbReference type="InterPro" id="IPR000276">
    <property type="entry name" value="GPCR_Rhodpsn"/>
</dbReference>
<dbReference type="InterPro" id="IPR017452">
    <property type="entry name" value="GPCR_Rhodpsn_7TM"/>
</dbReference>
<dbReference type="InterPro" id="IPR002131">
    <property type="entry name" value="Gphrmn_rcpt_fam"/>
</dbReference>
<dbReference type="InterPro" id="IPR001611">
    <property type="entry name" value="Leu-rich_rpt"/>
</dbReference>
<dbReference type="InterPro" id="IPR003591">
    <property type="entry name" value="Leu-rich_rpt_typical-subtyp"/>
</dbReference>
<dbReference type="InterPro" id="IPR032675">
    <property type="entry name" value="LRR_dom_sf"/>
</dbReference>
<dbReference type="InterPro" id="IPR000372">
    <property type="entry name" value="LRRNT"/>
</dbReference>
<dbReference type="PANTHER" id="PTHR24372">
    <property type="entry name" value="GLYCOPROTEIN HORMONE RECEPTOR"/>
    <property type="match status" value="1"/>
</dbReference>
<dbReference type="PANTHER" id="PTHR24372:SF67">
    <property type="entry name" value="LEUCINE-RICH REPEAT-CONTAINING G-PROTEIN COUPLED RECEPTOR 4"/>
    <property type="match status" value="1"/>
</dbReference>
<dbReference type="Pfam" id="PF00001">
    <property type="entry name" value="7tm_1"/>
    <property type="match status" value="1"/>
</dbReference>
<dbReference type="Pfam" id="PF13855">
    <property type="entry name" value="LRR_8"/>
    <property type="match status" value="4"/>
</dbReference>
<dbReference type="Pfam" id="PF01462">
    <property type="entry name" value="LRRNT"/>
    <property type="match status" value="1"/>
</dbReference>
<dbReference type="PRINTS" id="PR00373">
    <property type="entry name" value="GLYCHORMONER"/>
</dbReference>
<dbReference type="PRINTS" id="PR00237">
    <property type="entry name" value="GPCRRHODOPSN"/>
</dbReference>
<dbReference type="SMART" id="SM00364">
    <property type="entry name" value="LRR_BAC"/>
    <property type="match status" value="9"/>
</dbReference>
<dbReference type="SMART" id="SM00365">
    <property type="entry name" value="LRR_SD22"/>
    <property type="match status" value="5"/>
</dbReference>
<dbReference type="SMART" id="SM00369">
    <property type="entry name" value="LRR_TYP"/>
    <property type="match status" value="15"/>
</dbReference>
<dbReference type="SMART" id="SM00013">
    <property type="entry name" value="LRRNT"/>
    <property type="match status" value="1"/>
</dbReference>
<dbReference type="SUPFAM" id="SSF81321">
    <property type="entry name" value="Family A G protein-coupled receptor-like"/>
    <property type="match status" value="1"/>
</dbReference>
<dbReference type="SUPFAM" id="SSF52058">
    <property type="entry name" value="L domain-like"/>
    <property type="match status" value="2"/>
</dbReference>
<dbReference type="PROSITE" id="PS50262">
    <property type="entry name" value="G_PROTEIN_RECEP_F1_2"/>
    <property type="match status" value="1"/>
</dbReference>
<dbReference type="PROSITE" id="PS51450">
    <property type="entry name" value="LRR"/>
    <property type="match status" value="15"/>
</dbReference>
<reference key="1">
    <citation type="journal article" date="2009" name="PLoS Biol.">
        <title>Lineage-specific biology revealed by a finished genome assembly of the mouse.</title>
        <authorList>
            <person name="Church D.M."/>
            <person name="Goodstadt L."/>
            <person name="Hillier L.W."/>
            <person name="Zody M.C."/>
            <person name="Goldstein S."/>
            <person name="She X."/>
            <person name="Bult C.J."/>
            <person name="Agarwala R."/>
            <person name="Cherry J.L."/>
            <person name="DiCuccio M."/>
            <person name="Hlavina W."/>
            <person name="Kapustin Y."/>
            <person name="Meric P."/>
            <person name="Maglott D."/>
            <person name="Birtle Z."/>
            <person name="Marques A.C."/>
            <person name="Graves T."/>
            <person name="Zhou S."/>
            <person name="Teague B."/>
            <person name="Potamousis K."/>
            <person name="Churas C."/>
            <person name="Place M."/>
            <person name="Herschleb J."/>
            <person name="Runnheim R."/>
            <person name="Forrest D."/>
            <person name="Amos-Landgraf J."/>
            <person name="Schwartz D.C."/>
            <person name="Cheng Z."/>
            <person name="Lindblad-Toh K."/>
            <person name="Eichler E.E."/>
            <person name="Ponting C.P."/>
        </authorList>
    </citation>
    <scope>NUCLEOTIDE SEQUENCE [LARGE SCALE GENOMIC DNA]</scope>
    <source>
        <strain>C57BL/6J</strain>
    </source>
</reference>
<reference key="2">
    <citation type="journal article" date="2003" name="Proc. Natl. Acad. Sci. U.S.A.">
        <title>The G protein-coupled receptor repertoires of human and mouse.</title>
        <authorList>
            <person name="Vassilatis D.K."/>
            <person name="Hohmann J.G."/>
            <person name="Zeng H."/>
            <person name="Li F."/>
            <person name="Ranchalis J.E."/>
            <person name="Mortrud M.T."/>
            <person name="Brown A."/>
            <person name="Rodriguez S.S."/>
            <person name="Weller J.R."/>
            <person name="Wright A.C."/>
            <person name="Bergmann J.E."/>
            <person name="Gaitanaris G.A."/>
        </authorList>
    </citation>
    <scope>NUCLEOTIDE SEQUENCE [LARGE SCALE MRNA] OF 63-196</scope>
</reference>
<reference key="3">
    <citation type="journal article" date="2005" name="Science">
        <title>The transcriptional landscape of the mammalian genome.</title>
        <authorList>
            <person name="Carninci P."/>
            <person name="Kasukawa T."/>
            <person name="Katayama S."/>
            <person name="Gough J."/>
            <person name="Frith M.C."/>
            <person name="Maeda N."/>
            <person name="Oyama R."/>
            <person name="Ravasi T."/>
            <person name="Lenhard B."/>
            <person name="Wells C."/>
            <person name="Kodzius R."/>
            <person name="Shimokawa K."/>
            <person name="Bajic V.B."/>
            <person name="Brenner S.E."/>
            <person name="Batalov S."/>
            <person name="Forrest A.R."/>
            <person name="Zavolan M."/>
            <person name="Davis M.J."/>
            <person name="Wilming L.G."/>
            <person name="Aidinis V."/>
            <person name="Allen J.E."/>
            <person name="Ambesi-Impiombato A."/>
            <person name="Apweiler R."/>
            <person name="Aturaliya R.N."/>
            <person name="Bailey T.L."/>
            <person name="Bansal M."/>
            <person name="Baxter L."/>
            <person name="Beisel K.W."/>
            <person name="Bersano T."/>
            <person name="Bono H."/>
            <person name="Chalk A.M."/>
            <person name="Chiu K.P."/>
            <person name="Choudhary V."/>
            <person name="Christoffels A."/>
            <person name="Clutterbuck D.R."/>
            <person name="Crowe M.L."/>
            <person name="Dalla E."/>
            <person name="Dalrymple B.P."/>
            <person name="de Bono B."/>
            <person name="Della Gatta G."/>
            <person name="di Bernardo D."/>
            <person name="Down T."/>
            <person name="Engstrom P."/>
            <person name="Fagiolini M."/>
            <person name="Faulkner G."/>
            <person name="Fletcher C.F."/>
            <person name="Fukushima T."/>
            <person name="Furuno M."/>
            <person name="Futaki S."/>
            <person name="Gariboldi M."/>
            <person name="Georgii-Hemming P."/>
            <person name="Gingeras T.R."/>
            <person name="Gojobori T."/>
            <person name="Green R.E."/>
            <person name="Gustincich S."/>
            <person name="Harbers M."/>
            <person name="Hayashi Y."/>
            <person name="Hensch T.K."/>
            <person name="Hirokawa N."/>
            <person name="Hill D."/>
            <person name="Huminiecki L."/>
            <person name="Iacono M."/>
            <person name="Ikeo K."/>
            <person name="Iwama A."/>
            <person name="Ishikawa T."/>
            <person name="Jakt M."/>
            <person name="Kanapin A."/>
            <person name="Katoh M."/>
            <person name="Kawasawa Y."/>
            <person name="Kelso J."/>
            <person name="Kitamura H."/>
            <person name="Kitano H."/>
            <person name="Kollias G."/>
            <person name="Krishnan S.P."/>
            <person name="Kruger A."/>
            <person name="Kummerfeld S.K."/>
            <person name="Kurochkin I.V."/>
            <person name="Lareau L.F."/>
            <person name="Lazarevic D."/>
            <person name="Lipovich L."/>
            <person name="Liu J."/>
            <person name="Liuni S."/>
            <person name="McWilliam S."/>
            <person name="Madan Babu M."/>
            <person name="Madera M."/>
            <person name="Marchionni L."/>
            <person name="Matsuda H."/>
            <person name="Matsuzawa S."/>
            <person name="Miki H."/>
            <person name="Mignone F."/>
            <person name="Miyake S."/>
            <person name="Morris K."/>
            <person name="Mottagui-Tabar S."/>
            <person name="Mulder N."/>
            <person name="Nakano N."/>
            <person name="Nakauchi H."/>
            <person name="Ng P."/>
            <person name="Nilsson R."/>
            <person name="Nishiguchi S."/>
            <person name="Nishikawa S."/>
            <person name="Nori F."/>
            <person name="Ohara O."/>
            <person name="Okazaki Y."/>
            <person name="Orlando V."/>
            <person name="Pang K.C."/>
            <person name="Pavan W.J."/>
            <person name="Pavesi G."/>
            <person name="Pesole G."/>
            <person name="Petrovsky N."/>
            <person name="Piazza S."/>
            <person name="Reed J."/>
            <person name="Reid J.F."/>
            <person name="Ring B.Z."/>
            <person name="Ringwald M."/>
            <person name="Rost B."/>
            <person name="Ruan Y."/>
            <person name="Salzberg S.L."/>
            <person name="Sandelin A."/>
            <person name="Schneider C."/>
            <person name="Schoenbach C."/>
            <person name="Sekiguchi K."/>
            <person name="Semple C.A."/>
            <person name="Seno S."/>
            <person name="Sessa L."/>
            <person name="Sheng Y."/>
            <person name="Shibata Y."/>
            <person name="Shimada H."/>
            <person name="Shimada K."/>
            <person name="Silva D."/>
            <person name="Sinclair B."/>
            <person name="Sperling S."/>
            <person name="Stupka E."/>
            <person name="Sugiura K."/>
            <person name="Sultana R."/>
            <person name="Takenaka Y."/>
            <person name="Taki K."/>
            <person name="Tammoja K."/>
            <person name="Tan S.L."/>
            <person name="Tang S."/>
            <person name="Taylor M.S."/>
            <person name="Tegner J."/>
            <person name="Teichmann S.A."/>
            <person name="Ueda H.R."/>
            <person name="van Nimwegen E."/>
            <person name="Verardo R."/>
            <person name="Wei C.L."/>
            <person name="Yagi K."/>
            <person name="Yamanishi H."/>
            <person name="Zabarovsky E."/>
            <person name="Zhu S."/>
            <person name="Zimmer A."/>
            <person name="Hide W."/>
            <person name="Bult C."/>
            <person name="Grimmond S.M."/>
            <person name="Teasdale R.D."/>
            <person name="Liu E.T."/>
            <person name="Brusic V."/>
            <person name="Quackenbush J."/>
            <person name="Wahlestedt C."/>
            <person name="Mattick J.S."/>
            <person name="Hume D.A."/>
            <person name="Kai C."/>
            <person name="Sasaki D."/>
            <person name="Tomaru Y."/>
            <person name="Fukuda S."/>
            <person name="Kanamori-Katayama M."/>
            <person name="Suzuki M."/>
            <person name="Aoki J."/>
            <person name="Arakawa T."/>
            <person name="Iida J."/>
            <person name="Imamura K."/>
            <person name="Itoh M."/>
            <person name="Kato T."/>
            <person name="Kawaji H."/>
            <person name="Kawagashira N."/>
            <person name="Kawashima T."/>
            <person name="Kojima M."/>
            <person name="Kondo S."/>
            <person name="Konno H."/>
            <person name="Nakano K."/>
            <person name="Ninomiya N."/>
            <person name="Nishio T."/>
            <person name="Okada M."/>
            <person name="Plessy C."/>
            <person name="Shibata K."/>
            <person name="Shiraki T."/>
            <person name="Suzuki S."/>
            <person name="Tagami M."/>
            <person name="Waki K."/>
            <person name="Watahiki A."/>
            <person name="Okamura-Oho Y."/>
            <person name="Suzuki H."/>
            <person name="Kawai J."/>
            <person name="Hayashizaki Y."/>
        </authorList>
    </citation>
    <scope>NUCLEOTIDE SEQUENCE [LARGE SCALE MRNA] OF 74-951</scope>
    <source>
        <strain>C57BL/6J</strain>
        <tissue>Retina</tissue>
    </source>
</reference>
<reference key="4">
    <citation type="journal article" date="2004" name="Genome Res.">
        <title>The status, quality, and expansion of the NIH full-length cDNA project: the Mammalian Gene Collection (MGC).</title>
        <authorList>
            <consortium name="The MGC Project Team"/>
        </authorList>
    </citation>
    <scope>NUCLEOTIDE SEQUENCE [LARGE SCALE MRNA] OF 464-951</scope>
    <source>
        <strain>Czech II</strain>
        <tissue>Mammary tumor</tissue>
    </source>
</reference>
<reference key="5">
    <citation type="journal article" date="2004" name="Mol. Endocrinol.">
        <title>Leucine-rich repeat-containing, G protein-coupled receptor 4 null mice exhibit intrauterine growth retardation associated with embryonic and perinatal lethality.</title>
        <authorList>
            <person name="Mazerbourg S."/>
            <person name="Bouley D.M."/>
            <person name="Sudo S."/>
            <person name="Klein C.A."/>
            <person name="Zhang J.V."/>
            <person name="Kawamura K."/>
            <person name="Goodrich L.V."/>
            <person name="Rayburn H."/>
            <person name="Tessier-Lavigne M."/>
            <person name="Hsueh A.J."/>
        </authorList>
    </citation>
    <scope>DISRUPTION PHENOTYPE</scope>
</reference>
<reference key="6">
    <citation type="journal article" date="2006" name="Dev. Biol.">
        <title>Defective postnatal development of the male reproductive tract in LGR4 knockout mice.</title>
        <authorList>
            <person name="Mendive F."/>
            <person name="Laurent P."/>
            <person name="Van Schoore G."/>
            <person name="Skarnes W."/>
            <person name="Pochet R."/>
            <person name="Vassart G."/>
        </authorList>
    </citation>
    <scope>DISRUPTION PHENOTYPE</scope>
</reference>
<reference key="7">
    <citation type="journal article" date="2006" name="Nephron Exp. Nephrol.">
        <title>Leucine-rich repeat-containing G protein-coupled receptor-4 (LGR4, Gpr48) is essential for renal development in mice.</title>
        <authorList>
            <person name="Kato S."/>
            <person name="Matsubara M."/>
            <person name="Matsuo T."/>
            <person name="Mohri Y."/>
            <person name="Kazama I."/>
            <person name="Hatano R."/>
            <person name="Umezawa A."/>
            <person name="Nishimori K."/>
        </authorList>
    </citation>
    <scope>DISRUPTION PHENOTYPE</scope>
</reference>
<reference key="8">
    <citation type="journal article" date="2007" name="Biol. Reprod.">
        <title>LGR4 regulates the postnatal development and integrity of male reproductive tracts in mice.</title>
        <authorList>
            <person name="Hoshii T."/>
            <person name="Takeo T."/>
            <person name="Nakagata N."/>
            <person name="Takeya M."/>
            <person name="Araki K."/>
            <person name="Yamamura K."/>
        </authorList>
    </citation>
    <scope>DISRUPTION PHENOTYPE</scope>
</reference>
<reference key="9">
    <citation type="journal article" date="2007" name="FEBS Lett.">
        <title>Eye-open at birth phenotype with reduced keratinocyte motility in LGR4 null mice.</title>
        <authorList>
            <person name="Kato S."/>
            <person name="Mohri Y."/>
            <person name="Matsuo T."/>
            <person name="Ogawa E."/>
            <person name="Umezawa A."/>
            <person name="Okuyama R."/>
            <person name="Nishimori K."/>
        </authorList>
    </citation>
    <scope>DISRUPTION PHENOTYPE</scope>
</reference>
<reference key="10">
    <citation type="journal article" date="2008" name="Dev. Dyn.">
        <title>Impaired hair placode formation with reduced expression of hair follicle-related genes in mice lacking Lgr4.</title>
        <authorList>
            <person name="Mohri Y."/>
            <person name="Kato S."/>
            <person name="Umezawa A."/>
            <person name="Okuyama R."/>
            <person name="Nishimori K."/>
        </authorList>
    </citation>
    <scope>DISRUPTION PHENOTYPE</scope>
</reference>
<reference key="11">
    <citation type="journal article" date="2008" name="J. Biol. Chem.">
        <title>Inactivation of G-protein-coupled receptor 48 (Gpr48/Lgr4) impairs definitive erythropoiesis at midgestation through down-regulation of the ATF4 signaling pathway.</title>
        <authorList>
            <person name="Song H."/>
            <person name="Luo J."/>
            <person name="Luo W."/>
            <person name="Weng J."/>
            <person name="Wang Z."/>
            <person name="Li B."/>
            <person name="Li D."/>
            <person name="Liu M."/>
        </authorList>
    </citation>
    <scope>FUNCTION</scope>
    <scope>DISRUPTION PHENOTYPE</scope>
</reference>
<reference key="12">
    <citation type="journal article" date="2008" name="Proc. Natl. Acad. Sci. U.S.A.">
        <title>Deletion of G protein-coupled receptor 48 leads to ocular anterior segment dysgenesis (ASD) through down-regulation of Pitx2.</title>
        <authorList>
            <person name="Weng J."/>
            <person name="Luo J."/>
            <person name="Cheng X."/>
            <person name="Jin C."/>
            <person name="Zhou X."/>
            <person name="Qu J."/>
            <person name="Tu L."/>
            <person name="Ai D."/>
            <person name="Li D."/>
            <person name="Wang J."/>
            <person name="Martin J.F."/>
            <person name="Amendt B.A."/>
            <person name="Liu M."/>
        </authorList>
    </citation>
    <scope>DISRUPTION PHENOTYPE</scope>
</reference>
<reference key="13">
    <citation type="journal article" date="2009" name="Development">
        <title>Regulation of bone formation and remodeling by G-protein-coupled receptor 48.</title>
        <authorList>
            <person name="Luo J."/>
            <person name="Zhou W."/>
            <person name="Zhou X."/>
            <person name="Li D."/>
            <person name="Weng J."/>
            <person name="Yi Z."/>
            <person name="Cho S.G."/>
            <person name="Li C."/>
            <person name="Yi T."/>
            <person name="Wu X."/>
            <person name="Li X.Y."/>
            <person name="de Crombrugghe B."/>
            <person name="Hook M."/>
            <person name="Liu M."/>
        </authorList>
    </citation>
    <scope>FUNCTION</scope>
    <scope>DISRUPTION PHENOTYPE</scope>
</reference>
<reference key="14">
    <citation type="journal article" date="2010" name="Fertil. Steril.">
        <title>Reduced fertility with impairment of early-stage embryos observed in mice lacking Lgr4 in epithelial tissues.</title>
        <authorList>
            <person name="Mohri Y."/>
            <person name="Umezu T."/>
            <person name="Hidema S."/>
            <person name="Tomisawa H."/>
            <person name="Akamatsu A."/>
            <person name="Kato S."/>
            <person name="Nawa A."/>
            <person name="Nishimori K."/>
        </authorList>
    </citation>
    <scope>DISRUPTION PHENOTYPE</scope>
</reference>
<reference key="15">
    <citation type="journal article" date="2011" name="Dev. Dyn.">
        <title>Lgr4-deficient mice showed premature differentiation of ureteric bud with reduced expression of Wnt effector Lef1 and Gata3.</title>
        <authorList>
            <person name="Mohri Y."/>
            <person name="Oyama K."/>
            <person name="Akamatsu A."/>
            <person name="Kato S."/>
            <person name="Nishimori K."/>
        </authorList>
    </citation>
    <scope>DISRUPTION PHENOTYPE</scope>
</reference>
<reference key="16">
    <citation type="journal article" date="2011" name="EMBO Rep.">
        <title>Lgr4 is required for Paneth cell differentiation and maintenance of intestinal stem cells ex vivo.</title>
        <authorList>
            <person name="Mustata R.C."/>
            <person name="Van Loy T."/>
            <person name="Lefort A."/>
            <person name="Libert F."/>
            <person name="Strollo S."/>
            <person name="Vassart G."/>
            <person name="Garcia M.I."/>
        </authorList>
    </citation>
    <scope>FUNCTION</scope>
    <scope>DISRUPTION PHENOTYPE</scope>
</reference>
<reference key="17">
    <citation type="journal article" date="2011" name="Nature">
        <title>Lgr5 homologues associate with Wnt receptors and mediate R-spondin signalling.</title>
        <authorList>
            <person name="de Lau W."/>
            <person name="Barker N."/>
            <person name="Low T.Y."/>
            <person name="Koo B.K."/>
            <person name="Li V.S."/>
            <person name="Teunissen H."/>
            <person name="Kujala P."/>
            <person name="Haegebarth A."/>
            <person name="Peters P.J."/>
            <person name="van de Wetering M."/>
            <person name="Stange D.E."/>
            <person name="van Es J.E."/>
            <person name="Guardavaccaro D."/>
            <person name="Schasfoort R.B."/>
            <person name="Mohri Y."/>
            <person name="Nishimori K."/>
            <person name="Mohammed S."/>
            <person name="Heck A.J."/>
            <person name="Clevers H."/>
        </authorList>
    </citation>
    <scope>FUNCTION</scope>
    <scope>DISRUPTION PHENOTYPE</scope>
</reference>
<reference key="18">
    <citation type="journal article" date="2011" name="Proc. Natl. Acad. Sci. U.S.A.">
        <title>R-spondins function as ligands of the orphan receptors LGR4 and LGR5 to regulate Wnt/beta-catenin signaling.</title>
        <authorList>
            <person name="Carmon K.S."/>
            <person name="Gong X."/>
            <person name="Lin Q."/>
            <person name="Thomas A."/>
            <person name="Liu Q."/>
        </authorList>
    </citation>
    <scope>FUNCTION</scope>
    <scope>SUBCELLULAR LOCATION</scope>
    <scope>INTERACTION WITH RSPO1; RSPO2; RSPO3 AND RSPO4</scope>
</reference>
<reference key="19">
    <citation type="journal article" date="2013" name="Development">
        <title>Lgr4-mediated Wnt/beta-catenin signaling in peritubular myoid cells is essential for spermatogenesis.</title>
        <authorList>
            <person name="Qian Y."/>
            <person name="Liu S."/>
            <person name="Guan Y."/>
            <person name="Pan H."/>
            <person name="Guan X."/>
            <person name="Qiu Z."/>
            <person name="Li L."/>
            <person name="Gao N."/>
            <person name="Zhao Y."/>
            <person name="Li X."/>
            <person name="Lu Y."/>
            <person name="Liu M."/>
            <person name="Li D."/>
        </authorList>
    </citation>
    <scope>FUNCTION</scope>
    <scope>DISRUPTION PHENOTYPE</scope>
</reference>
<reference key="20">
    <citation type="journal article" date="2013" name="J. Biol. Chem.">
        <title>Lgr4 gene deficiency increases susceptibility and severity of dextran sodium sulfate-induced inflammatory bowel disease in mice.</title>
        <authorList>
            <person name="Liu S."/>
            <person name="Qian Y."/>
            <person name="Li L."/>
            <person name="Wei G."/>
            <person name="Guan Y."/>
            <person name="Pan H."/>
            <person name="Guan X."/>
            <person name="Zhang L."/>
            <person name="Lu X."/>
            <person name="Zhao Y."/>
            <person name="Liu M."/>
            <person name="Li D."/>
        </authorList>
    </citation>
    <scope>FUNCTION</scope>
    <scope>DISRUPTION PHENOTYPE</scope>
</reference>
<reference key="21">
    <citation type="journal article" date="2013" name="J. Biol. Chem.">
        <title>Lgr4/Gpr48 negatively regulates TLR2/4 associated pattern recognition and innate immunity by targeting CD14 expression.</title>
        <authorList>
            <person name="Du B."/>
            <person name="Luo W."/>
            <person name="Li R."/>
            <person name="Tan B."/>
            <person name="Han H."/>
            <person name="Lu X."/>
            <person name="Li D."/>
            <person name="Qian M."/>
            <person name="Zhang D."/>
            <person name="Zhao Y."/>
            <person name="Liu M."/>
        </authorList>
    </citation>
    <scope>FUNCTION</scope>
    <scope>DISRUPTION PHENOTYPE</scope>
    <scope>MUTAGENESIS OF THR-755</scope>
</reference>
<reference key="22">
    <citation type="journal article" date="2013" name="J. Cell Sci.">
        <title>Multi-functional norrin is a ligand for the LGR4 receptor.</title>
        <authorList>
            <person name="Deng C."/>
            <person name="Reddy P."/>
            <person name="Cheng Y."/>
            <person name="Luo C.W."/>
            <person name="Hsiao C.L."/>
            <person name="Hsueh A.J."/>
        </authorList>
    </citation>
    <scope>FUNCTION</scope>
</reference>
<reference key="23">
    <citation type="journal article" date="2014" name="J. Mol. Endocrinol.">
        <title>LGR4 acts as a link between the peripheral circadian clock and lipid metabolism in liver.</title>
        <authorList>
            <person name="Wang F."/>
            <person name="Zhang X."/>
            <person name="Wang J."/>
            <person name="Chen M."/>
            <person name="Fan N."/>
            <person name="Ma Q."/>
            <person name="Liu R."/>
            <person name="Wang R."/>
            <person name="Li X."/>
            <person name="Liu M."/>
            <person name="Ning G."/>
        </authorList>
    </citation>
    <scope>FUNCTION</scope>
    <scope>INDUCTION</scope>
</reference>
<reference key="24">
    <citation type="journal article" date="2018" name="Nature">
        <title>RSPO2 inhibition of RNF43 and ZNRF3 governs limb development independently of LGR4/5/6.</title>
        <authorList>
            <person name="Szenker-Ravi E."/>
            <person name="Altunoglu U."/>
            <person name="Leushacke M."/>
            <person name="Bosso-Lefevre C."/>
            <person name="Khatoo M."/>
            <person name="Thi Tran H."/>
            <person name="Naert T."/>
            <person name="Noelanders R."/>
            <person name="Hajamohideen A."/>
            <person name="Beneteau C."/>
            <person name="de Sousa S.B."/>
            <person name="Karaman B."/>
            <person name="Latypova X."/>
            <person name="Basaran S."/>
            <person name="Yuecel E.B."/>
            <person name="Tan T.T."/>
            <person name="Vlaminck L."/>
            <person name="Nayak S.S."/>
            <person name="Shukla A."/>
            <person name="Girisha K.M."/>
            <person name="Le Caignec C."/>
            <person name="Soshnikova N."/>
            <person name="Uyguner Z.O."/>
            <person name="Vleminckx K."/>
            <person name="Barker N."/>
            <person name="Kayserili H."/>
            <person name="Reversade B."/>
        </authorList>
    </citation>
    <scope>DISRUPTION PHENOTYPE</scope>
    <scope>DEVELOPMENTAL STAGE</scope>
</reference>
<reference key="25">
    <citation type="journal article" date="2020" name="JCI Insight">
        <title>LGR4 deficiency results in delayed puberty through impaired Wnt/beta-catenin signaling.</title>
        <authorList>
            <person name="Mancini A."/>
            <person name="Howard S.R."/>
            <person name="Marelli F."/>
            <person name="Cabrera C.P."/>
            <person name="Barnes M.R."/>
            <person name="Sternberg M.J."/>
            <person name="Leprovots M."/>
            <person name="Hadjidemetriou I."/>
            <person name="Monti E."/>
            <person name="David A."/>
            <person name="Wehkalampi K."/>
            <person name="Oleari R."/>
            <person name="Lettieri A."/>
            <person name="Vezzoli V."/>
            <person name="Vassart G."/>
            <person name="Cariboni A."/>
            <person name="Bonomi M."/>
            <person name="Garcia M.I."/>
            <person name="Guasti L."/>
            <person name="Dunkel L."/>
        </authorList>
    </citation>
    <scope>FUNCTION</scope>
</reference>
<sequence>MPGPLRLLCFFALGLLGSAGPSGAAPPLCAAPCSCDGDRRVDCSGKGLTAVPEGLSAFTQALDISMNNITQLPEDAFKNFPFLEELQLAGNDLSFIHPKALSGLKELKVLTLQNNQLKTVPSEAIRGLSALQSLRLDANHITSVPEDSFEGLVQLRHLWLDDNILTEVPVRPLSNLPTLQALTLALNNISSIPDFAFTNLSSLVVLHLHNNKIKSLSQHCFDGLDNLETLDLNYNNLDEFPQAIKALPSLKELGFHSNSISVIPDGAFAGNPLLRTIHLYDNPLSFVGNSAFHNLSDLHSLVIRGASLVQWFPNLAGTVHLESLTLTGTKISSIPDDLCQNQKMLRTLDLSYNDIRDLPSFNGCRALEEISLQRNQISLIKETTFQGLTSLRILDLSRNLIREIHSGAFAKLGTITNLDVSFNELTSFPTEGLNGLNQLKLVGNFQLKDALAARDFANLRSLSVPYAYQCCAFWGCDSYANLNTEDNSPQDHSVTKEKGATDAANATSTAESEEHSQIIIHCTPSTGAFKPCEYLLGSWMIRLTVWFIFLVALLFNLLVILTVFASCSSLPASKLFIGLISVSNLLMGIYTGILTFLDAVSWGRFAEFGIWWETGSGCKVAGSLAVFSSESAVFLLTLAAVERSVFAKDVMKNGKSSHLRQFQVAALVALLGAAIAGCFPLFHGGQYSASPLCLPFPTGETPSLGFTVTLVLLNSLAFLLMAIIYTKLYCNLEKEDPSENSQSSMIKHVAWLIFTNCIFFCPVAFFSFAPLITAISISPEIMKSVTLIFFPLPACLNPVLYVFFNPKFKDDWKLLKRRVTRKHGSVSVSISSQGGCGEQDFYYDCGMYSHLQGNLTVCDCCESFLLTKPVSCKHLIKSHSCPVLTVASCQRPEAYWSDCGTQSAHSDYADEEDSFVSDSSDQVQACGRACFYQSRGFPLVRYAYNLPRVRD</sequence>
<accession>A2ARI4</accession>
<accession>A2ARI3</accession>
<accession>Q6PHA3</accession>
<accession>Q80T31</accession>
<accession>Q8BXS9</accession>
<name>LGR4_MOUSE</name>
<keyword id="KW-0025">Alternative splicing</keyword>
<keyword id="KW-0090">Biological rhythms</keyword>
<keyword id="KW-1003">Cell membrane</keyword>
<keyword id="KW-0217">Developmental protein</keyword>
<keyword id="KW-0221">Differentiation</keyword>
<keyword id="KW-1015">Disulfide bond</keyword>
<keyword id="KW-0297">G-protein coupled receptor</keyword>
<keyword id="KW-0325">Glycoprotein</keyword>
<keyword id="KW-0391">Immunity</keyword>
<keyword id="KW-0399">Innate immunity</keyword>
<keyword id="KW-0433">Leucine-rich repeat</keyword>
<keyword id="KW-0472">Membrane</keyword>
<keyword id="KW-0597">Phosphoprotein</keyword>
<keyword id="KW-0675">Receptor</keyword>
<keyword id="KW-1185">Reference proteome</keyword>
<keyword id="KW-0677">Repeat</keyword>
<keyword id="KW-0732">Signal</keyword>
<keyword id="KW-0744">Spermatogenesis</keyword>
<keyword id="KW-0807">Transducer</keyword>
<keyword id="KW-0812">Transmembrane</keyword>
<keyword id="KW-1133">Transmembrane helix</keyword>
<keyword id="KW-0879">Wnt signaling pathway</keyword>
<gene>
    <name type="primary">Lgr4</name>
    <name type="synonym">Gpr48</name>
</gene>
<feature type="signal peptide" evidence="2">
    <location>
        <begin position="1"/>
        <end position="24"/>
    </location>
</feature>
<feature type="chain" id="PRO_0000303240" description="Leucine-rich repeat-containing G-protein coupled receptor 4">
    <location>
        <begin position="25"/>
        <end position="951"/>
    </location>
</feature>
<feature type="topological domain" description="Extracellular" evidence="2">
    <location>
        <begin position="25"/>
        <end position="544"/>
    </location>
</feature>
<feature type="transmembrane region" description="Helical; Name=1" evidence="2">
    <location>
        <begin position="545"/>
        <end position="565"/>
    </location>
</feature>
<feature type="topological domain" description="Cytoplasmic" evidence="2">
    <location>
        <begin position="566"/>
        <end position="575"/>
    </location>
</feature>
<feature type="transmembrane region" description="Helical; Name=2" evidence="2">
    <location>
        <begin position="576"/>
        <end position="596"/>
    </location>
</feature>
<feature type="topological domain" description="Extracellular" evidence="2">
    <location>
        <begin position="597"/>
        <end position="619"/>
    </location>
</feature>
<feature type="transmembrane region" description="Helical; Name=3" evidence="2">
    <location>
        <begin position="620"/>
        <end position="640"/>
    </location>
</feature>
<feature type="topological domain" description="Cytoplasmic" evidence="2">
    <location>
        <begin position="641"/>
        <end position="661"/>
    </location>
</feature>
<feature type="transmembrane region" description="Helical; Name=4" evidence="2">
    <location>
        <begin position="662"/>
        <end position="682"/>
    </location>
</feature>
<feature type="topological domain" description="Extracellular" evidence="2">
    <location>
        <begin position="683"/>
        <end position="703"/>
    </location>
</feature>
<feature type="transmembrane region" description="Helical; Name=5" evidence="2">
    <location>
        <begin position="704"/>
        <end position="724"/>
    </location>
</feature>
<feature type="topological domain" description="Cytoplasmic" evidence="2">
    <location>
        <begin position="725"/>
        <end position="756"/>
    </location>
</feature>
<feature type="transmembrane region" description="Helical; Name=6" evidence="2">
    <location>
        <begin position="757"/>
        <end position="777"/>
    </location>
</feature>
<feature type="topological domain" description="Extracellular" evidence="2">
    <location>
        <begin position="778"/>
        <end position="783"/>
    </location>
</feature>
<feature type="transmembrane region" description="Helical; Name=7" evidence="2">
    <location>
        <begin position="784"/>
        <end position="804"/>
    </location>
</feature>
<feature type="topological domain" description="Cytoplasmic" evidence="2">
    <location>
        <begin position="805"/>
        <end position="951"/>
    </location>
</feature>
<feature type="domain" description="LRRNT">
    <location>
        <begin position="25"/>
        <end position="57"/>
    </location>
</feature>
<feature type="repeat" description="LRR 1">
    <location>
        <begin position="58"/>
        <end position="79"/>
    </location>
</feature>
<feature type="repeat" description="LRR 2">
    <location>
        <begin position="82"/>
        <end position="103"/>
    </location>
</feature>
<feature type="repeat" description="LRR 3">
    <location>
        <begin position="106"/>
        <end position="127"/>
    </location>
</feature>
<feature type="repeat" description="LRR 4">
    <location>
        <begin position="130"/>
        <end position="151"/>
    </location>
</feature>
<feature type="repeat" description="LRR 5">
    <location>
        <begin position="154"/>
        <end position="177"/>
    </location>
</feature>
<feature type="repeat" description="LRR 6">
    <location>
        <begin position="178"/>
        <end position="199"/>
    </location>
</feature>
<feature type="repeat" description="LRR 7">
    <location>
        <begin position="202"/>
        <end position="223"/>
    </location>
</feature>
<feature type="repeat" description="LRR 8">
    <location>
        <begin position="226"/>
        <end position="247"/>
    </location>
</feature>
<feature type="repeat" description="LRR 9">
    <location>
        <begin position="249"/>
        <end position="270"/>
    </location>
</feature>
<feature type="repeat" description="LRR 10">
    <location>
        <begin position="273"/>
        <end position="294"/>
    </location>
</feature>
<feature type="repeat" description="LRR 11">
    <location>
        <begin position="320"/>
        <end position="341"/>
    </location>
</feature>
<feature type="repeat" description="LRR 12">
    <location>
        <begin position="344"/>
        <end position="365"/>
    </location>
</feature>
<feature type="repeat" description="LRR 13">
    <location>
        <begin position="366"/>
        <end position="387"/>
    </location>
</feature>
<feature type="repeat" description="LRR 14">
    <location>
        <begin position="390"/>
        <end position="411"/>
    </location>
</feature>
<feature type="repeat" description="LRR 15">
    <location>
        <begin position="414"/>
        <end position="435"/>
    </location>
</feature>
<feature type="region of interest" description="Disordered" evidence="4">
    <location>
        <begin position="487"/>
        <end position="512"/>
    </location>
</feature>
<feature type="compositionally biased region" description="Low complexity" evidence="4">
    <location>
        <begin position="501"/>
        <end position="510"/>
    </location>
</feature>
<feature type="modified residue" description="Phosphoserine" evidence="1">
    <location>
        <position position="920"/>
    </location>
</feature>
<feature type="glycosylation site" description="N-linked (GlcNAc...) asparagine" evidence="2">
    <location>
        <position position="68"/>
    </location>
</feature>
<feature type="glycosylation site" description="N-linked (GlcNAc...) asparagine" evidence="2">
    <location>
        <position position="188"/>
    </location>
</feature>
<feature type="glycosylation site" description="N-linked (GlcNAc...) asparagine" evidence="2">
    <location>
        <position position="199"/>
    </location>
</feature>
<feature type="glycosylation site" description="N-linked (GlcNAc...) asparagine" evidence="2">
    <location>
        <position position="294"/>
    </location>
</feature>
<feature type="glycosylation site" description="N-linked (GlcNAc...) asparagine" evidence="2">
    <location>
        <position position="505"/>
    </location>
</feature>
<feature type="disulfide bond" evidence="3">
    <location>
        <begin position="29"/>
        <end position="35"/>
    </location>
</feature>
<feature type="disulfide bond" evidence="3">
    <location>
        <begin position="33"/>
        <end position="43"/>
    </location>
</feature>
<feature type="disulfide bond" evidence="3">
    <location>
        <begin position="339"/>
        <end position="364"/>
    </location>
</feature>
<feature type="disulfide bond" evidence="3">
    <location>
        <begin position="470"/>
        <end position="522"/>
    </location>
</feature>
<feature type="disulfide bond" evidence="3">
    <location>
        <begin position="471"/>
        <end position="476"/>
    </location>
</feature>
<feature type="disulfide bond" evidence="3">
    <location>
        <begin position="618"/>
        <end position="693"/>
    </location>
</feature>
<feature type="splice variant" id="VSP_047137" description="In isoform 2." evidence="26">
    <location>
        <begin position="62"/>
        <end position="85"/>
    </location>
</feature>
<feature type="mutagenesis site" description="Confers constitutive activity." evidence="22">
    <original>T</original>
    <variation>I</variation>
    <location>
        <position position="755"/>
    </location>
</feature>
<feature type="sequence conflict" description="In Ref. 4; AAH56637." evidence="26" ref="4">
    <original>V</original>
    <variation>L</variation>
    <location>
        <position position="668"/>
    </location>
</feature>
<feature type="sequence conflict" description="In Ref. 4; AAH56637." evidence="26" ref="4">
    <original>G</original>
    <variation>R</variation>
    <location>
        <position position="684"/>
    </location>
</feature>
<feature type="sequence conflict" description="In Ref. 3; BAC31882." evidence="26" ref="3">
    <original>C</original>
    <variation>F</variation>
    <location>
        <position position="730"/>
    </location>
</feature>
<feature type="sequence conflict" description="In Ref. 4; AAH56637." evidence="26" ref="4">
    <original>R</original>
    <variation>P</variation>
    <location>
        <position position="928"/>
    </location>
</feature>
<proteinExistence type="evidence at protein level"/>
<comment type="function">
    <text evidence="12 13 15 17 18 19 20 21 22 23 25">Receptor for R-spondins that potentiates the canonical Wnt signaling pathway and is involved in the formation of various organs. Upon binding to R-spondins (RSPO1, RSPO2, RSPO3 or RSPO4), associates with phosphorylated LRP6 and frizzled receptors that are activated by extracellular Wnt receptors, triggering the canonical Wnt signaling pathway to increase expression of target genes. In contrast to classical G-protein coupled receptors, does not activate heterotrimeric G-proteins to transduce the signal. Its function as activator of the Wnt signaling pathway is required for the development of various organs, including liver, kidney, intestine, bone, reproductive tract and eye. May also act as a receptor for norrin (NDP), such results however require additional confirmation in vivo. Required during spermatogenesis to activate the Wnt signaling pathway in peritubular myoid cells. Required for the maintenance of intestinal stem cells and Paneth cell differentiation in postnatal intestinal crypts. Acts as a regulator of bone formation and remodeling. Involved in kidney development; required for maintaining the ureteric bud in an undifferentiated state. Involved in the development of the anterior segment of the eye. Required during erythropoiesis. Also acts as a negative regulator of innate immunity by inhibiting TLR2/TLR4 associated pattern-recognition and pro-inflammatory cytokine production. Plays an important role in regulating the circadian rhythms of plasma lipids, partially through regulating the rhythmic expression of MTTP (PubMed:24353284). Required for proper development of GnRH neurons (gonadotropin-releasing hormone expressing neurons) that control the release of reproductive hormones from the pituitary gland (PubMed:32493844).</text>
</comment>
<comment type="subcellular location">
    <subcellularLocation>
        <location evidence="17">Cell membrane</location>
        <topology evidence="17">Multi-pass membrane protein</topology>
    </subcellularLocation>
</comment>
<comment type="alternative products">
    <event type="alternative splicing"/>
    <isoform>
        <id>A2ARI4-1</id>
        <name>1</name>
        <sequence type="displayed"/>
    </isoform>
    <isoform>
        <id>A2ARI4-2</id>
        <name>2</name>
        <sequence type="described" ref="VSP_047137"/>
    </isoform>
</comment>
<comment type="developmental stage">
    <text evidence="24">During limb development, at 14.5 dpc, expressed in the mesenchyme, but not in the overlying ectoderm of the limb bud. In developing lungs, at 14.5 dpc, expressed at low levels in both the epithelium and mesenchyme lineages.</text>
</comment>
<comment type="induction">
    <text evidence="23">Expressed in a circadian manner in the liver.</text>
</comment>
<comment type="disruption phenotype">
    <text evidence="5 6 7 8 9 10 11 12 13 14 15 16 18 19 21 22 24">Strong variations in phenotypes, probably depending on the strain background used in the different experiments. According to a first report done in a C57BL/6 background, mice show intra-uterine growth retardation leading to embryonic and perinatal lethality (PubMed:15192078). A lethal phenotype was confirmed by other groups. In some cases however, few mice survive until adulthood. Mice that survive show wide spectrum of anterior segment dysgenesis phenotypes, including microphthalmia, iris hypoplasia, irdiocorneal angle malformation, cornea dysgenesis and cataract (PubMed:18424556). Defects in osteoblast differentiation and mineralization during embryonic bone formation are also observed. Postnatal mice that survive show defects in bone remodeling (PubMed:19605502). According to other reports done in other strain backgrounds, mice do not die and display defects in the male reproductive tract during the postnatal period (PubMed:16406039, PubMed:17079737, PubMed:23533175). Mice also show small kidneys, in which the total number and density of the glomeruli are decreased (PubMed:16785743). The use of conditional knockouts, leads to defects in hair placode formation, possibly due to reduced keratinocyte migration (PubMed:17079737, PubMed:17850793). Decrease in epithelial cell proliferation and strong reduction in terminal differentiation of Paneth cells in postnatal intestinal crypts (PubMed:21508962, PubMed:23393138). Fetuses display transient anemia during midgestation and abnormal definitive erythropoiesis (PubMed:18955481). Mice are also more susceptible and have much higher mortality to lipopolysaccharide (LPS) stimulation due to over-activated innate immune response (PubMed:23589304). Conditional knockout of both Lgr4 and Lgr5 in the gut results in Wnt signaling inhibition and results in the rapid demise of intestinal crypts (PubMed:21727895). Simultaneous knockdown of LGR4, LGR5 and LGR6 results in developmental phenotypes, such as cleft palate and ankyloglossia, but not in tetra-amelia with lung agenesis (PubMed:29769720).</text>
</comment>
<comment type="similarity">
    <text evidence="3">Belongs to the G-protein coupled receptor 1 family.</text>
</comment>
<protein>
    <recommendedName>
        <fullName>Leucine-rich repeat-containing G-protein coupled receptor 4</fullName>
    </recommendedName>
    <alternativeName>
        <fullName>G-protein coupled receptor 48</fullName>
    </alternativeName>
</protein>
<organism>
    <name type="scientific">Mus musculus</name>
    <name type="common">Mouse</name>
    <dbReference type="NCBI Taxonomy" id="10090"/>
    <lineage>
        <taxon>Eukaryota</taxon>
        <taxon>Metazoa</taxon>
        <taxon>Chordata</taxon>
        <taxon>Craniata</taxon>
        <taxon>Vertebrata</taxon>
        <taxon>Euteleostomi</taxon>
        <taxon>Mammalia</taxon>
        <taxon>Eutheria</taxon>
        <taxon>Euarchontoglires</taxon>
        <taxon>Glires</taxon>
        <taxon>Rodentia</taxon>
        <taxon>Myomorpha</taxon>
        <taxon>Muroidea</taxon>
        <taxon>Muridae</taxon>
        <taxon>Murinae</taxon>
        <taxon>Mus</taxon>
        <taxon>Mus</taxon>
    </lineage>
</organism>